<gene>
    <name evidence="1" type="primary">clsA</name>
    <name type="synonym">cls</name>
    <name type="ordered locus">PC1_1991</name>
</gene>
<protein>
    <recommendedName>
        <fullName evidence="1">Cardiolipin synthase A</fullName>
        <shortName evidence="1">CL synthase</shortName>
        <ecNumber evidence="1">2.7.8.-</ecNumber>
    </recommendedName>
</protein>
<organism>
    <name type="scientific">Pectobacterium carotovorum subsp. carotovorum (strain PC1)</name>
    <dbReference type="NCBI Taxonomy" id="561230"/>
    <lineage>
        <taxon>Bacteria</taxon>
        <taxon>Pseudomonadati</taxon>
        <taxon>Pseudomonadota</taxon>
        <taxon>Gammaproteobacteria</taxon>
        <taxon>Enterobacterales</taxon>
        <taxon>Pectobacteriaceae</taxon>
        <taxon>Pectobacterium</taxon>
    </lineage>
</organism>
<name>CLSA_PECCP</name>
<dbReference type="EC" id="2.7.8.-" evidence="1"/>
<dbReference type="EMBL" id="CP001657">
    <property type="protein sequence ID" value="ACT13032.1"/>
    <property type="molecule type" value="Genomic_DNA"/>
</dbReference>
<dbReference type="RefSeq" id="WP_015840225.1">
    <property type="nucleotide sequence ID" value="NC_012917.1"/>
</dbReference>
<dbReference type="SMR" id="C6DGY3"/>
<dbReference type="STRING" id="561230.PC1_1991"/>
<dbReference type="GeneID" id="67793993"/>
<dbReference type="KEGG" id="pct:PC1_1991"/>
<dbReference type="eggNOG" id="COG1502">
    <property type="taxonomic scope" value="Bacteria"/>
</dbReference>
<dbReference type="HOGENOM" id="CLU_038053_1_0_6"/>
<dbReference type="OrthoDB" id="9814092at2"/>
<dbReference type="Proteomes" id="UP000002736">
    <property type="component" value="Chromosome"/>
</dbReference>
<dbReference type="GO" id="GO:0005886">
    <property type="term" value="C:plasma membrane"/>
    <property type="evidence" value="ECO:0007669"/>
    <property type="project" value="UniProtKB-SubCell"/>
</dbReference>
<dbReference type="GO" id="GO:0008808">
    <property type="term" value="F:cardiolipin synthase activity"/>
    <property type="evidence" value="ECO:0007669"/>
    <property type="project" value="InterPro"/>
</dbReference>
<dbReference type="GO" id="GO:0032049">
    <property type="term" value="P:cardiolipin biosynthetic process"/>
    <property type="evidence" value="ECO:0007669"/>
    <property type="project" value="InterPro"/>
</dbReference>
<dbReference type="CDD" id="cd09152">
    <property type="entry name" value="PLDc_EcCLS_like_1"/>
    <property type="match status" value="1"/>
</dbReference>
<dbReference type="CDD" id="cd09158">
    <property type="entry name" value="PLDc_EcCLS_like_2"/>
    <property type="match status" value="1"/>
</dbReference>
<dbReference type="FunFam" id="3.30.870.10:FF:000002">
    <property type="entry name" value="Cardiolipin synthase A"/>
    <property type="match status" value="1"/>
</dbReference>
<dbReference type="FunFam" id="3.30.870.10:FF:000003">
    <property type="entry name" value="Cardiolipin synthase A"/>
    <property type="match status" value="1"/>
</dbReference>
<dbReference type="Gene3D" id="3.30.870.10">
    <property type="entry name" value="Endonuclease Chain A"/>
    <property type="match status" value="2"/>
</dbReference>
<dbReference type="HAMAP" id="MF_00190">
    <property type="entry name" value="Cardiolipin_synth_ClsA"/>
    <property type="match status" value="1"/>
</dbReference>
<dbReference type="InterPro" id="IPR022924">
    <property type="entry name" value="Cardiolipin_synthase"/>
</dbReference>
<dbReference type="InterPro" id="IPR030840">
    <property type="entry name" value="CL_synthase_A"/>
</dbReference>
<dbReference type="InterPro" id="IPR027379">
    <property type="entry name" value="CLS_N"/>
</dbReference>
<dbReference type="InterPro" id="IPR025202">
    <property type="entry name" value="PLD-like_dom"/>
</dbReference>
<dbReference type="InterPro" id="IPR001736">
    <property type="entry name" value="PLipase_D/transphosphatidylase"/>
</dbReference>
<dbReference type="NCBIfam" id="TIGR04265">
    <property type="entry name" value="bac_cardiolipin"/>
    <property type="match status" value="1"/>
</dbReference>
<dbReference type="PANTHER" id="PTHR21248">
    <property type="entry name" value="CARDIOLIPIN SYNTHASE"/>
    <property type="match status" value="1"/>
</dbReference>
<dbReference type="PANTHER" id="PTHR21248:SF22">
    <property type="entry name" value="PHOSPHOLIPASE D"/>
    <property type="match status" value="1"/>
</dbReference>
<dbReference type="Pfam" id="PF13091">
    <property type="entry name" value="PLDc_2"/>
    <property type="match status" value="2"/>
</dbReference>
<dbReference type="Pfam" id="PF13396">
    <property type="entry name" value="PLDc_N"/>
    <property type="match status" value="1"/>
</dbReference>
<dbReference type="SMART" id="SM00155">
    <property type="entry name" value="PLDc"/>
    <property type="match status" value="2"/>
</dbReference>
<dbReference type="SUPFAM" id="SSF56024">
    <property type="entry name" value="Phospholipase D/nuclease"/>
    <property type="match status" value="2"/>
</dbReference>
<dbReference type="PROSITE" id="PS50035">
    <property type="entry name" value="PLD"/>
    <property type="match status" value="2"/>
</dbReference>
<keyword id="KW-0997">Cell inner membrane</keyword>
<keyword id="KW-1003">Cell membrane</keyword>
<keyword id="KW-0444">Lipid biosynthesis</keyword>
<keyword id="KW-0443">Lipid metabolism</keyword>
<keyword id="KW-0472">Membrane</keyword>
<keyword id="KW-0594">Phospholipid biosynthesis</keyword>
<keyword id="KW-1208">Phospholipid metabolism</keyword>
<keyword id="KW-0677">Repeat</keyword>
<keyword id="KW-0808">Transferase</keyword>
<keyword id="KW-0812">Transmembrane</keyword>
<keyword id="KW-1133">Transmembrane helix</keyword>
<feature type="chain" id="PRO_1000203997" description="Cardiolipin synthase A">
    <location>
        <begin position="1"/>
        <end position="486"/>
    </location>
</feature>
<feature type="transmembrane region" description="Helical" evidence="1">
    <location>
        <begin position="3"/>
        <end position="23"/>
    </location>
</feature>
<feature type="transmembrane region" description="Helical" evidence="1">
    <location>
        <begin position="38"/>
        <end position="58"/>
    </location>
</feature>
<feature type="domain" description="PLD phosphodiesterase 1" evidence="1">
    <location>
        <begin position="219"/>
        <end position="246"/>
    </location>
</feature>
<feature type="domain" description="PLD phosphodiesterase 2" evidence="1">
    <location>
        <begin position="399"/>
        <end position="426"/>
    </location>
</feature>
<feature type="active site" evidence="1">
    <location>
        <position position="224"/>
    </location>
</feature>
<feature type="active site" evidence="1">
    <location>
        <position position="226"/>
    </location>
</feature>
<feature type="active site" evidence="1">
    <location>
        <position position="231"/>
    </location>
</feature>
<feature type="active site" evidence="1">
    <location>
        <position position="404"/>
    </location>
</feature>
<feature type="active site" evidence="1">
    <location>
        <position position="406"/>
    </location>
</feature>
<feature type="active site" evidence="1">
    <location>
        <position position="411"/>
    </location>
</feature>
<comment type="function">
    <text evidence="1">Catalyzes the reversible phosphatidyl group transfer from one phosphatidylglycerol molecule to another to form cardiolipin (CL) (diphosphatidylglycerol) and glycerol.</text>
</comment>
<comment type="catalytic activity">
    <reaction evidence="1">
        <text>2 a 1,2-diacyl-sn-glycero-3-phospho-(1'-sn-glycerol) = a cardiolipin + glycerol</text>
        <dbReference type="Rhea" id="RHEA:31451"/>
        <dbReference type="ChEBI" id="CHEBI:17754"/>
        <dbReference type="ChEBI" id="CHEBI:62237"/>
        <dbReference type="ChEBI" id="CHEBI:64716"/>
    </reaction>
</comment>
<comment type="subcellular location">
    <subcellularLocation>
        <location evidence="1">Cell inner membrane</location>
        <topology evidence="1">Multi-pass membrane protein</topology>
    </subcellularLocation>
</comment>
<comment type="similarity">
    <text evidence="1">Belongs to the phospholipase D family. Cardiolipin synthase subfamily. ClsA sub-subfamily.</text>
</comment>
<accession>C6DGY3</accession>
<sequence>MSTFYTVISWLLVFGYWLLIAGVTLRILMKRRAVPSAMAWLLVIYILPLVGIVAYLSFGELHLGKRRAERASKMWPSTAKWLRELKEYRRIFATENSEVASALFQLCERRQGVGGVKGNQLQLMTTFDDTIKALLRDIELARSNIEMVFYIWQPGGLVEQVSSSLIAAARRGVHCRILLDSAGSVQFFRQHHPELMRTAGIEVVEALKVNLFRAFLRRMDLRQHRKIILIDNRIAYTGSMNMVDPRFFKQDAGVGQWIDLMARIEGPVATTLGIIYCCDWEMETGKRLLPPPPDVNVMPFEQESGHTIQVIASGPGYPEEMIHQALLTSVYSARKQLIMTTPYFVPSDDLLHAICTAAQRGVDVSIIVPHKNDSVLVGWASRAFFTELLAAGVKIYQFKDGLLHTKSVLVDGQLSLVGTVNLDMRSLWLNFEITLVIDDAGFGSDLACVQEDYIARSRLLNATQWQNRPYWQRIVERLFYFFSPLL</sequence>
<evidence type="ECO:0000255" key="1">
    <source>
        <dbReference type="HAMAP-Rule" id="MF_00190"/>
    </source>
</evidence>
<reference key="1">
    <citation type="submission" date="2009-07" db="EMBL/GenBank/DDBJ databases">
        <title>Complete sequence of Pectobacterium carotovorum subsp. carotovorum PC1.</title>
        <authorList>
            <consortium name="US DOE Joint Genome Institute"/>
            <person name="Lucas S."/>
            <person name="Copeland A."/>
            <person name="Lapidus A."/>
            <person name="Glavina del Rio T."/>
            <person name="Tice H."/>
            <person name="Bruce D."/>
            <person name="Goodwin L."/>
            <person name="Pitluck S."/>
            <person name="Munk A.C."/>
            <person name="Brettin T."/>
            <person name="Detter J.C."/>
            <person name="Han C."/>
            <person name="Tapia R."/>
            <person name="Larimer F."/>
            <person name="Land M."/>
            <person name="Hauser L."/>
            <person name="Kyrpides N."/>
            <person name="Mikhailova N."/>
            <person name="Balakrishnan V."/>
            <person name="Glasner J."/>
            <person name="Perna N.T."/>
        </authorList>
    </citation>
    <scope>NUCLEOTIDE SEQUENCE [LARGE SCALE GENOMIC DNA]</scope>
    <source>
        <strain>PC1</strain>
    </source>
</reference>
<proteinExistence type="inferred from homology"/>